<evidence type="ECO:0000250" key="1"/>
<evidence type="ECO:0000255" key="2">
    <source>
        <dbReference type="PROSITE-ProRule" id="PRU00286"/>
    </source>
</evidence>
<evidence type="ECO:0000255" key="3">
    <source>
        <dbReference type="PROSITE-ProRule" id="PRU00546"/>
    </source>
</evidence>
<evidence type="ECO:0000256" key="4">
    <source>
        <dbReference type="SAM" id="MobiDB-lite"/>
    </source>
</evidence>
<evidence type="ECO:0000269" key="5">
    <source>
    </source>
</evidence>
<evidence type="ECO:0000305" key="6"/>
<protein>
    <recommendedName>
        <fullName>Mitochondrial protein import protein mas5</fullName>
    </recommendedName>
</protein>
<feature type="chain" id="PRO_0000383329" description="Mitochondrial protein import protein mas5">
    <location>
        <begin position="1"/>
        <end position="398"/>
    </location>
</feature>
<feature type="domain" description="J" evidence="2">
    <location>
        <begin position="7"/>
        <end position="88"/>
    </location>
</feature>
<feature type="repeat" description="CXXCXGXG motif">
    <location>
        <begin position="152"/>
        <end position="159"/>
    </location>
</feature>
<feature type="repeat" description="CXXCXGXG motif">
    <location>
        <begin position="166"/>
        <end position="173"/>
    </location>
</feature>
<feature type="repeat" description="CXXCXGXG motif">
    <location>
        <begin position="192"/>
        <end position="199"/>
    </location>
</feature>
<feature type="repeat" description="CXXCXGXG motif">
    <location>
        <begin position="207"/>
        <end position="214"/>
    </location>
</feature>
<feature type="zinc finger region" description="CR-type" evidence="3">
    <location>
        <begin position="139"/>
        <end position="219"/>
    </location>
</feature>
<feature type="region of interest" description="Disordered" evidence="4">
    <location>
        <begin position="367"/>
        <end position="386"/>
    </location>
</feature>
<feature type="binding site" evidence="1">
    <location>
        <begin position="144"/>
        <end position="146"/>
    </location>
    <ligand>
        <name>substrate</name>
    </ligand>
</feature>
<feature type="binding site" evidence="1">
    <location>
        <position position="152"/>
    </location>
    <ligand>
        <name>Zn(2+)</name>
        <dbReference type="ChEBI" id="CHEBI:29105"/>
        <label>1</label>
    </ligand>
</feature>
<feature type="binding site" evidence="1">
    <location>
        <position position="155"/>
    </location>
    <ligand>
        <name>Zn(2+)</name>
        <dbReference type="ChEBI" id="CHEBI:29105"/>
        <label>1</label>
    </ligand>
</feature>
<feature type="binding site" evidence="1">
    <location>
        <position position="166"/>
    </location>
    <ligand>
        <name>Zn(2+)</name>
        <dbReference type="ChEBI" id="CHEBI:29105"/>
        <label>2</label>
    </ligand>
</feature>
<feature type="binding site" evidence="1">
    <location>
        <position position="169"/>
    </location>
    <ligand>
        <name>Zn(2+)</name>
        <dbReference type="ChEBI" id="CHEBI:29105"/>
        <label>2</label>
    </ligand>
</feature>
<feature type="binding site" evidence="1">
    <location>
        <position position="192"/>
    </location>
    <ligand>
        <name>Zn(2+)</name>
        <dbReference type="ChEBI" id="CHEBI:29105"/>
        <label>2</label>
    </ligand>
</feature>
<feature type="binding site" evidence="1">
    <location>
        <position position="195"/>
    </location>
    <ligand>
        <name>Zn(2+)</name>
        <dbReference type="ChEBI" id="CHEBI:29105"/>
        <label>2</label>
    </ligand>
</feature>
<feature type="binding site" evidence="1">
    <location>
        <position position="207"/>
    </location>
    <ligand>
        <name>Zn(2+)</name>
        <dbReference type="ChEBI" id="CHEBI:29105"/>
        <label>1</label>
    </ligand>
</feature>
<feature type="binding site" evidence="1">
    <location>
        <position position="210"/>
    </location>
    <ligand>
        <name>Zn(2+)</name>
        <dbReference type="ChEBI" id="CHEBI:29105"/>
        <label>1</label>
    </ligand>
</feature>
<feature type="binding site" evidence="1">
    <location>
        <begin position="221"/>
        <end position="222"/>
    </location>
    <ligand>
        <name>substrate</name>
    </ligand>
</feature>
<feature type="binding site" evidence="1">
    <location>
        <begin position="253"/>
        <end position="255"/>
    </location>
    <ligand>
        <name>substrate</name>
    </ligand>
</feature>
<proteinExistence type="evidence at protein level"/>
<organism>
    <name type="scientific">Encephalitozoon cuniculi (strain GB-M1)</name>
    <name type="common">Microsporidian parasite</name>
    <dbReference type="NCBI Taxonomy" id="284813"/>
    <lineage>
        <taxon>Eukaryota</taxon>
        <taxon>Fungi</taxon>
        <taxon>Fungi incertae sedis</taxon>
        <taxon>Microsporidia</taxon>
        <taxon>Unikaryonidae</taxon>
        <taxon>Encephalitozoon</taxon>
    </lineage>
</organism>
<dbReference type="EMBL" id="AL590447">
    <property type="protein sequence ID" value="CAD25608.1"/>
    <property type="molecule type" value="Genomic_DNA"/>
</dbReference>
<dbReference type="RefSeq" id="NP_586004.1">
    <property type="nucleotide sequence ID" value="NM_001041626.1"/>
</dbReference>
<dbReference type="SMR" id="Q8SRK0"/>
<dbReference type="FunCoup" id="Q8SRK0">
    <property type="interactions" value="274"/>
</dbReference>
<dbReference type="STRING" id="284813.Q8SRK0"/>
<dbReference type="GeneID" id="859433"/>
<dbReference type="KEGG" id="ecu:ECU07_0760"/>
<dbReference type="VEuPathDB" id="MicrosporidiaDB:ECU07_0760"/>
<dbReference type="HOGENOM" id="CLU_017633_0_7_1"/>
<dbReference type="InParanoid" id="Q8SRK0"/>
<dbReference type="OMA" id="FFFQDGE"/>
<dbReference type="OrthoDB" id="550424at2759"/>
<dbReference type="Proteomes" id="UP000000819">
    <property type="component" value="Chromosome VII"/>
</dbReference>
<dbReference type="GO" id="GO:0005737">
    <property type="term" value="C:cytoplasm"/>
    <property type="evidence" value="ECO:0007669"/>
    <property type="project" value="UniProtKB-SubCell"/>
</dbReference>
<dbReference type="GO" id="GO:0030544">
    <property type="term" value="F:Hsp70 protein binding"/>
    <property type="evidence" value="ECO:0007669"/>
    <property type="project" value="InterPro"/>
</dbReference>
<dbReference type="GO" id="GO:0051082">
    <property type="term" value="F:unfolded protein binding"/>
    <property type="evidence" value="ECO:0007669"/>
    <property type="project" value="InterPro"/>
</dbReference>
<dbReference type="GO" id="GO:0008270">
    <property type="term" value="F:zinc ion binding"/>
    <property type="evidence" value="ECO:0007669"/>
    <property type="project" value="UniProtKB-KW"/>
</dbReference>
<dbReference type="GO" id="GO:0006457">
    <property type="term" value="P:protein folding"/>
    <property type="evidence" value="ECO:0007669"/>
    <property type="project" value="InterPro"/>
</dbReference>
<dbReference type="GO" id="GO:0015031">
    <property type="term" value="P:protein transport"/>
    <property type="evidence" value="ECO:0007669"/>
    <property type="project" value="UniProtKB-KW"/>
</dbReference>
<dbReference type="CDD" id="cd06257">
    <property type="entry name" value="DnaJ"/>
    <property type="match status" value="1"/>
</dbReference>
<dbReference type="CDD" id="cd10747">
    <property type="entry name" value="DnaJ_C"/>
    <property type="match status" value="1"/>
</dbReference>
<dbReference type="CDD" id="cd10719">
    <property type="entry name" value="DnaJ_zf"/>
    <property type="match status" value="1"/>
</dbReference>
<dbReference type="FunFam" id="2.10.230.10:FF:000001">
    <property type="entry name" value="DnaJ subfamily A member 2"/>
    <property type="match status" value="1"/>
</dbReference>
<dbReference type="Gene3D" id="1.10.287.110">
    <property type="entry name" value="DnaJ domain"/>
    <property type="match status" value="1"/>
</dbReference>
<dbReference type="Gene3D" id="2.10.230.10">
    <property type="entry name" value="Heat shock protein DnaJ, cysteine-rich domain"/>
    <property type="match status" value="1"/>
</dbReference>
<dbReference type="Gene3D" id="2.60.260.20">
    <property type="entry name" value="Urease metallochaperone UreE, N-terminal domain"/>
    <property type="match status" value="2"/>
</dbReference>
<dbReference type="InterPro" id="IPR002939">
    <property type="entry name" value="DnaJ_C"/>
</dbReference>
<dbReference type="InterPro" id="IPR001623">
    <property type="entry name" value="DnaJ_domain"/>
</dbReference>
<dbReference type="InterPro" id="IPR044713">
    <property type="entry name" value="DNJA1/2-like"/>
</dbReference>
<dbReference type="InterPro" id="IPR008971">
    <property type="entry name" value="HSP40/DnaJ_pept-bd"/>
</dbReference>
<dbReference type="InterPro" id="IPR001305">
    <property type="entry name" value="HSP_DnaJ_Cys-rich_dom"/>
</dbReference>
<dbReference type="InterPro" id="IPR036410">
    <property type="entry name" value="HSP_DnaJ_Cys-rich_dom_sf"/>
</dbReference>
<dbReference type="InterPro" id="IPR036869">
    <property type="entry name" value="J_dom_sf"/>
</dbReference>
<dbReference type="PANTHER" id="PTHR43888">
    <property type="entry name" value="DNAJ-LIKE-2, ISOFORM A-RELATED"/>
    <property type="match status" value="1"/>
</dbReference>
<dbReference type="Pfam" id="PF00226">
    <property type="entry name" value="DnaJ"/>
    <property type="match status" value="1"/>
</dbReference>
<dbReference type="Pfam" id="PF01556">
    <property type="entry name" value="DnaJ_C"/>
    <property type="match status" value="1"/>
</dbReference>
<dbReference type="Pfam" id="PF00684">
    <property type="entry name" value="DnaJ_CXXCXGXG"/>
    <property type="match status" value="1"/>
</dbReference>
<dbReference type="SMART" id="SM00271">
    <property type="entry name" value="DnaJ"/>
    <property type="match status" value="1"/>
</dbReference>
<dbReference type="SUPFAM" id="SSF46565">
    <property type="entry name" value="Chaperone J-domain"/>
    <property type="match status" value="1"/>
</dbReference>
<dbReference type="SUPFAM" id="SSF57938">
    <property type="entry name" value="DnaJ/Hsp40 cysteine-rich domain"/>
    <property type="match status" value="1"/>
</dbReference>
<dbReference type="SUPFAM" id="SSF49493">
    <property type="entry name" value="HSP40/DnaJ peptide-binding domain"/>
    <property type="match status" value="2"/>
</dbReference>
<dbReference type="PROSITE" id="PS50076">
    <property type="entry name" value="DNAJ_2"/>
    <property type="match status" value="1"/>
</dbReference>
<dbReference type="PROSITE" id="PS51188">
    <property type="entry name" value="ZF_CR"/>
    <property type="match status" value="1"/>
</dbReference>
<name>MAS5_ENCCU</name>
<keyword id="KW-0143">Chaperone</keyword>
<keyword id="KW-0963">Cytoplasm</keyword>
<keyword id="KW-0449">Lipoprotein</keyword>
<keyword id="KW-0479">Metal-binding</keyword>
<keyword id="KW-0653">Protein transport</keyword>
<keyword id="KW-1185">Reference proteome</keyword>
<keyword id="KW-0677">Repeat</keyword>
<keyword id="KW-0346">Stress response</keyword>
<keyword id="KW-0813">Transport</keyword>
<keyword id="KW-0862">Zinc</keyword>
<keyword id="KW-0863">Zinc-finger</keyword>
<comment type="function">
    <text evidence="1">Probably involved in mitosomal protein import.</text>
</comment>
<comment type="cofactor">
    <cofactor evidence="1">
        <name>Zn(2+)</name>
        <dbReference type="ChEBI" id="CHEBI:29105"/>
    </cofactor>
    <text evidence="1">Binds 2 Zn(2+) ions per monomer.</text>
</comment>
<comment type="subunit">
    <text evidence="1">Homodimer.</text>
</comment>
<comment type="subcellular location">
    <subcellularLocation>
        <location evidence="1">Cytoplasm</location>
    </subcellularLocation>
</comment>
<comment type="developmental stage">
    <text evidence="5">Expressed in late sporogonial stages.</text>
</comment>
<comment type="similarity">
    <text evidence="6">Belongs to the DnaJ family.</text>
</comment>
<accession>Q8SRK0</accession>
<gene>
    <name type="primary">MAS5</name>
    <name type="ordered locus">ECU07_0760</name>
</gene>
<sequence length="398" mass="43986">MSKDPKGYYKVLELSPGASVAEVRKAYAKQQAKYHLDSPYMKNKLKNAASDEEREKIKKECGEMSARLNSAKSVLFDEKKKKEYDSGMGEFGAHFSGGGYSDIFDIFSQFTGGRGHQRTNKVSSTKYVITVSLRESFVGKVSKFNVRTEKVCTTCDGKGGKDVETCKKCNGNGVYTSRRSLGGFVTLAETRCDGCDGSGHKIKGKPCSTCNGAEYIQDKTMFEVNIKPGVRKGEKIVFEGMGDQRRGHVPGDVIFIIDVQEDSRFERCGNDLVGNIDIPLYTAIGGGVVYFTHIDGRQLEINVSPFRTFDTALKIRNEGFKGSRTGNLILKPNIIIGSESDRAKIMQVLSAPSKKPYGTFTKVNSEFGSMPEPERDHEDASEEGAQSARSFFNNFSFF</sequence>
<reference key="1">
    <citation type="journal article" date="2001" name="Nature">
        <title>Genome sequence and gene compaction of the eukaryote parasite Encephalitozoon cuniculi.</title>
        <authorList>
            <person name="Katinka M.D."/>
            <person name="Duprat S."/>
            <person name="Cornillot E."/>
            <person name="Metenier G."/>
            <person name="Thomarat F."/>
            <person name="Prensier G."/>
            <person name="Barbe V."/>
            <person name="Peyretaillade E."/>
            <person name="Brottier P."/>
            <person name="Wincker P."/>
            <person name="Delbac F."/>
            <person name="El Alaoui H."/>
            <person name="Peyret P."/>
            <person name="Saurin W."/>
            <person name="Gouy M."/>
            <person name="Weissenbach J."/>
            <person name="Vivares C.P."/>
        </authorList>
    </citation>
    <scope>NUCLEOTIDE SEQUENCE [LARGE SCALE GENOMIC DNA]</scope>
    <source>
        <strain>GB-M1</strain>
    </source>
</reference>
<reference key="2">
    <citation type="journal article" date="2006" name="Proteomics">
        <title>Proteomic analysis of the eukaryotic parasite Encephalitozoon cuniculi (microsporidia): a reference map for proteins expressed in late sporogonial stages.</title>
        <authorList>
            <person name="Brosson D."/>
            <person name="Kuhn L."/>
            <person name="Delbac F."/>
            <person name="Garin J."/>
            <person name="Vivares C.P."/>
            <person name="Texier C."/>
        </authorList>
    </citation>
    <scope>IDENTIFICATION BY MASS SPECTROMETRY [LARGE SCALE ANALYSIS]</scope>
    <scope>DEVELOPMENTAL STAGE</scope>
</reference>